<reference key="1">
    <citation type="journal article" date="2007" name="PLoS ONE">
        <title>Paradoxical DNA repair and peroxide resistance gene conservation in Bacillus pumilus SAFR-032.</title>
        <authorList>
            <person name="Gioia J."/>
            <person name="Yerrapragada S."/>
            <person name="Qin X."/>
            <person name="Jiang H."/>
            <person name="Igboeli O.C."/>
            <person name="Muzny D."/>
            <person name="Dugan-Rocha S."/>
            <person name="Ding Y."/>
            <person name="Hawes A."/>
            <person name="Liu W."/>
            <person name="Perez L."/>
            <person name="Kovar C."/>
            <person name="Dinh H."/>
            <person name="Lee S."/>
            <person name="Nazareth L."/>
            <person name="Blyth P."/>
            <person name="Holder M."/>
            <person name="Buhay C."/>
            <person name="Tirumalai M.R."/>
            <person name="Liu Y."/>
            <person name="Dasgupta I."/>
            <person name="Bokhetache L."/>
            <person name="Fujita M."/>
            <person name="Karouia F."/>
            <person name="Eswara Moorthy P."/>
            <person name="Siefert J."/>
            <person name="Uzman A."/>
            <person name="Buzumbo P."/>
            <person name="Verma A."/>
            <person name="Zwiya H."/>
            <person name="McWilliams B.D."/>
            <person name="Olowu A."/>
            <person name="Clinkenbeard K.D."/>
            <person name="Newcombe D."/>
            <person name="Golebiewski L."/>
            <person name="Petrosino J.F."/>
            <person name="Nicholson W.L."/>
            <person name="Fox G.E."/>
            <person name="Venkateswaran K."/>
            <person name="Highlander S.K."/>
            <person name="Weinstock G.M."/>
        </authorList>
    </citation>
    <scope>NUCLEOTIDE SEQUENCE [LARGE SCALE GENOMIC DNA]</scope>
    <source>
        <strain>SAFR-032</strain>
    </source>
</reference>
<gene>
    <name evidence="1" type="primary">sepF</name>
    <name type="ordered locus">BPUM_1438</name>
</gene>
<comment type="function">
    <text evidence="1">Cell division protein that is part of the divisome complex and is recruited early to the Z-ring. Probably stimulates Z-ring formation, perhaps through the cross-linking of FtsZ protofilaments. Its function overlaps with FtsA.</text>
</comment>
<comment type="subunit">
    <text evidence="1">Homodimer. Interacts with FtsZ.</text>
</comment>
<comment type="subcellular location">
    <subcellularLocation>
        <location evidence="1">Cytoplasm</location>
    </subcellularLocation>
    <text evidence="1">Localizes to the division site, in a FtsZ-dependent manner.</text>
</comment>
<comment type="similarity">
    <text evidence="1">Belongs to the SepF family.</text>
</comment>
<evidence type="ECO:0000255" key="1">
    <source>
        <dbReference type="HAMAP-Rule" id="MF_01197"/>
    </source>
</evidence>
<evidence type="ECO:0000256" key="2">
    <source>
        <dbReference type="SAM" id="MobiDB-lite"/>
    </source>
</evidence>
<name>SEPF_BACP2</name>
<sequence>MSIKNKFKSFFTLDDEEYEYEYIDEEREPVQEEKGTKDKAAFQERPQTGKQNVVSLQSVQKSSKVVLSEPRVYAEAQEIADHIKNRRAVVVNLQRIQHDQAKRIIDFLSGTVYAIGGDIQRIGSNIFLCTPDNVDVSGTISELLTEEEPQRW</sequence>
<protein>
    <recommendedName>
        <fullName evidence="1">Cell division protein SepF</fullName>
    </recommendedName>
</protein>
<dbReference type="EMBL" id="CP000813">
    <property type="protein sequence ID" value="ABV62121.1"/>
    <property type="molecule type" value="Genomic_DNA"/>
</dbReference>
<dbReference type="RefSeq" id="WP_003212271.1">
    <property type="nucleotide sequence ID" value="NZ_VEIS01000003.1"/>
</dbReference>
<dbReference type="SMR" id="A8FD04"/>
<dbReference type="STRING" id="315750.BPUM_1438"/>
<dbReference type="GeneID" id="5620701"/>
<dbReference type="KEGG" id="bpu:BPUM_1438"/>
<dbReference type="eggNOG" id="COG1799">
    <property type="taxonomic scope" value="Bacteria"/>
</dbReference>
<dbReference type="HOGENOM" id="CLU_078499_4_1_9"/>
<dbReference type="OrthoDB" id="9815206at2"/>
<dbReference type="Proteomes" id="UP000001355">
    <property type="component" value="Chromosome"/>
</dbReference>
<dbReference type="GO" id="GO:0005737">
    <property type="term" value="C:cytoplasm"/>
    <property type="evidence" value="ECO:0007669"/>
    <property type="project" value="UniProtKB-SubCell"/>
</dbReference>
<dbReference type="GO" id="GO:0000917">
    <property type="term" value="P:division septum assembly"/>
    <property type="evidence" value="ECO:0007669"/>
    <property type="project" value="UniProtKB-KW"/>
</dbReference>
<dbReference type="GO" id="GO:0043093">
    <property type="term" value="P:FtsZ-dependent cytokinesis"/>
    <property type="evidence" value="ECO:0007669"/>
    <property type="project" value="UniProtKB-UniRule"/>
</dbReference>
<dbReference type="FunFam" id="3.30.110.150:FF:000002">
    <property type="entry name" value="Cell division protein SepF"/>
    <property type="match status" value="1"/>
</dbReference>
<dbReference type="Gene3D" id="3.30.110.150">
    <property type="entry name" value="SepF-like protein"/>
    <property type="match status" value="1"/>
</dbReference>
<dbReference type="HAMAP" id="MF_01197">
    <property type="entry name" value="SepF"/>
    <property type="match status" value="1"/>
</dbReference>
<dbReference type="InterPro" id="IPR023052">
    <property type="entry name" value="Cell_div_SepF"/>
</dbReference>
<dbReference type="InterPro" id="IPR007561">
    <property type="entry name" value="Cell_div_SepF/SepF-rel"/>
</dbReference>
<dbReference type="InterPro" id="IPR038594">
    <property type="entry name" value="SepF-like_sf"/>
</dbReference>
<dbReference type="PANTHER" id="PTHR35798">
    <property type="entry name" value="CELL DIVISION PROTEIN SEPF"/>
    <property type="match status" value="1"/>
</dbReference>
<dbReference type="PANTHER" id="PTHR35798:SF1">
    <property type="entry name" value="CELL DIVISION PROTEIN SEPF"/>
    <property type="match status" value="1"/>
</dbReference>
<dbReference type="Pfam" id="PF04472">
    <property type="entry name" value="SepF"/>
    <property type="match status" value="1"/>
</dbReference>
<keyword id="KW-0131">Cell cycle</keyword>
<keyword id="KW-0132">Cell division</keyword>
<keyword id="KW-0963">Cytoplasm</keyword>
<keyword id="KW-0717">Septation</keyword>
<organism>
    <name type="scientific">Bacillus pumilus (strain SAFR-032)</name>
    <dbReference type="NCBI Taxonomy" id="315750"/>
    <lineage>
        <taxon>Bacteria</taxon>
        <taxon>Bacillati</taxon>
        <taxon>Bacillota</taxon>
        <taxon>Bacilli</taxon>
        <taxon>Bacillales</taxon>
        <taxon>Bacillaceae</taxon>
        <taxon>Bacillus</taxon>
    </lineage>
</organism>
<feature type="chain" id="PRO_0000333983" description="Cell division protein SepF">
    <location>
        <begin position="1"/>
        <end position="152"/>
    </location>
</feature>
<feature type="region of interest" description="Disordered" evidence="2">
    <location>
        <begin position="25"/>
        <end position="54"/>
    </location>
</feature>
<feature type="compositionally biased region" description="Basic and acidic residues" evidence="2">
    <location>
        <begin position="28"/>
        <end position="42"/>
    </location>
</feature>
<proteinExistence type="inferred from homology"/>
<accession>A8FD04</accession>